<sequence>MPTLGVNIDHVATIRQARRTVEPDPAAAAVLVELAGADGITVHLREDRRHIQDRDVEILRRTVRTHLNLEMAATRAMVDFALDVRPDYVTLVPERREEVTTEGGLDVGGQIASVGLAVEQLQCAGIPVSLFVDPDAAQLQASARTGAKFVELHTGRYAEARGEQAQRSELAQLAAACDEAQALGLRVNAGHGLTYWNVAPVARLSGMEELNIGHSIIARAVLVGLERAVREMKQAMIAG</sequence>
<proteinExistence type="inferred from homology"/>
<comment type="function">
    <text evidence="1">Catalyzes the complicated ring closure reaction between the two acyclic compounds 1-deoxy-D-xylulose-5-phosphate (DXP) and 3-amino-2-oxopropyl phosphate (1-amino-acetone-3-phosphate or AAP) to form pyridoxine 5'-phosphate (PNP) and inorganic phosphate.</text>
</comment>
<comment type="catalytic activity">
    <reaction evidence="1">
        <text>3-amino-2-oxopropyl phosphate + 1-deoxy-D-xylulose 5-phosphate = pyridoxine 5'-phosphate + phosphate + 2 H2O + H(+)</text>
        <dbReference type="Rhea" id="RHEA:15265"/>
        <dbReference type="ChEBI" id="CHEBI:15377"/>
        <dbReference type="ChEBI" id="CHEBI:15378"/>
        <dbReference type="ChEBI" id="CHEBI:43474"/>
        <dbReference type="ChEBI" id="CHEBI:57279"/>
        <dbReference type="ChEBI" id="CHEBI:57792"/>
        <dbReference type="ChEBI" id="CHEBI:58589"/>
        <dbReference type="EC" id="2.6.99.2"/>
    </reaction>
</comment>
<comment type="pathway">
    <text evidence="1">Cofactor biosynthesis; pyridoxine 5'-phosphate biosynthesis; pyridoxine 5'-phosphate from D-erythrose 4-phosphate: step 5/5.</text>
</comment>
<comment type="subunit">
    <text evidence="1">Homooctamer; tetramer of dimers.</text>
</comment>
<comment type="subcellular location">
    <subcellularLocation>
        <location evidence="1">Cytoplasm</location>
    </subcellularLocation>
</comment>
<comment type="similarity">
    <text evidence="1">Belongs to the PNP synthase family.</text>
</comment>
<name>PDXJ_GLOVI</name>
<dbReference type="EC" id="2.6.99.2" evidence="1"/>
<dbReference type="EMBL" id="BA000045">
    <property type="protein sequence ID" value="BAC88044.1"/>
    <property type="molecule type" value="Genomic_DNA"/>
</dbReference>
<dbReference type="RefSeq" id="NP_923049.1">
    <property type="nucleotide sequence ID" value="NC_005125.1"/>
</dbReference>
<dbReference type="RefSeq" id="WP_011140107.1">
    <property type="nucleotide sequence ID" value="NC_005125.1"/>
</dbReference>
<dbReference type="SMR" id="Q7NPF2"/>
<dbReference type="STRING" id="251221.gene:10757572"/>
<dbReference type="EnsemblBacteria" id="BAC88044">
    <property type="protein sequence ID" value="BAC88044"/>
    <property type="gene ID" value="BAC88044"/>
</dbReference>
<dbReference type="KEGG" id="gvi:gll0103"/>
<dbReference type="PATRIC" id="fig|251221.4.peg.105"/>
<dbReference type="eggNOG" id="COG0854">
    <property type="taxonomic scope" value="Bacteria"/>
</dbReference>
<dbReference type="HOGENOM" id="CLU_074563_0_0_3"/>
<dbReference type="InParanoid" id="Q7NPF2"/>
<dbReference type="OrthoDB" id="9806590at2"/>
<dbReference type="PhylomeDB" id="Q7NPF2"/>
<dbReference type="UniPathway" id="UPA00244">
    <property type="reaction ID" value="UER00313"/>
</dbReference>
<dbReference type="Proteomes" id="UP000000557">
    <property type="component" value="Chromosome"/>
</dbReference>
<dbReference type="GO" id="GO:0005829">
    <property type="term" value="C:cytosol"/>
    <property type="evidence" value="ECO:0000318"/>
    <property type="project" value="GO_Central"/>
</dbReference>
<dbReference type="GO" id="GO:0033856">
    <property type="term" value="F:pyridoxine 5'-phosphate synthase activity"/>
    <property type="evidence" value="ECO:0000318"/>
    <property type="project" value="GO_Central"/>
</dbReference>
<dbReference type="GO" id="GO:0008615">
    <property type="term" value="P:pyridoxine biosynthetic process"/>
    <property type="evidence" value="ECO:0000318"/>
    <property type="project" value="GO_Central"/>
</dbReference>
<dbReference type="CDD" id="cd00003">
    <property type="entry name" value="PNPsynthase"/>
    <property type="match status" value="1"/>
</dbReference>
<dbReference type="Gene3D" id="3.20.20.70">
    <property type="entry name" value="Aldolase class I"/>
    <property type="match status" value="1"/>
</dbReference>
<dbReference type="HAMAP" id="MF_00279">
    <property type="entry name" value="PdxJ"/>
    <property type="match status" value="1"/>
</dbReference>
<dbReference type="InterPro" id="IPR013785">
    <property type="entry name" value="Aldolase_TIM"/>
</dbReference>
<dbReference type="InterPro" id="IPR004569">
    <property type="entry name" value="PyrdxlP_synth_PdxJ"/>
</dbReference>
<dbReference type="InterPro" id="IPR036130">
    <property type="entry name" value="Pyridoxine-5'_phos_synth"/>
</dbReference>
<dbReference type="NCBIfam" id="TIGR00559">
    <property type="entry name" value="pdxJ"/>
    <property type="match status" value="1"/>
</dbReference>
<dbReference type="NCBIfam" id="NF003623">
    <property type="entry name" value="PRK05265.1-1"/>
    <property type="match status" value="1"/>
</dbReference>
<dbReference type="NCBIfam" id="NF003625">
    <property type="entry name" value="PRK05265.1-3"/>
    <property type="match status" value="1"/>
</dbReference>
<dbReference type="NCBIfam" id="NF003627">
    <property type="entry name" value="PRK05265.1-5"/>
    <property type="match status" value="1"/>
</dbReference>
<dbReference type="PANTHER" id="PTHR30456">
    <property type="entry name" value="PYRIDOXINE 5'-PHOSPHATE SYNTHASE"/>
    <property type="match status" value="1"/>
</dbReference>
<dbReference type="PANTHER" id="PTHR30456:SF0">
    <property type="entry name" value="PYRIDOXINE 5'-PHOSPHATE SYNTHASE"/>
    <property type="match status" value="1"/>
</dbReference>
<dbReference type="Pfam" id="PF03740">
    <property type="entry name" value="PdxJ"/>
    <property type="match status" value="1"/>
</dbReference>
<dbReference type="SUPFAM" id="SSF63892">
    <property type="entry name" value="Pyridoxine 5'-phosphate synthase"/>
    <property type="match status" value="1"/>
</dbReference>
<evidence type="ECO:0000255" key="1">
    <source>
        <dbReference type="HAMAP-Rule" id="MF_00279"/>
    </source>
</evidence>
<protein>
    <recommendedName>
        <fullName evidence="1">Pyridoxine 5'-phosphate synthase</fullName>
        <shortName evidence="1">PNP synthase</shortName>
        <ecNumber evidence="1">2.6.99.2</ecNumber>
    </recommendedName>
</protein>
<gene>
    <name evidence="1" type="primary">pdxJ</name>
    <name type="ordered locus">gll0103</name>
</gene>
<accession>Q7NPF2</accession>
<organism>
    <name type="scientific">Gloeobacter violaceus (strain ATCC 29082 / PCC 7421)</name>
    <dbReference type="NCBI Taxonomy" id="251221"/>
    <lineage>
        <taxon>Bacteria</taxon>
        <taxon>Bacillati</taxon>
        <taxon>Cyanobacteriota</taxon>
        <taxon>Cyanophyceae</taxon>
        <taxon>Gloeobacterales</taxon>
        <taxon>Gloeobacteraceae</taxon>
        <taxon>Gloeobacter</taxon>
    </lineage>
</organism>
<reference key="1">
    <citation type="journal article" date="2003" name="DNA Res.">
        <title>Complete genome structure of Gloeobacter violaceus PCC 7421, a cyanobacterium that lacks thylakoids.</title>
        <authorList>
            <person name="Nakamura Y."/>
            <person name="Kaneko T."/>
            <person name="Sato S."/>
            <person name="Mimuro M."/>
            <person name="Miyashita H."/>
            <person name="Tsuchiya T."/>
            <person name="Sasamoto S."/>
            <person name="Watanabe A."/>
            <person name="Kawashima K."/>
            <person name="Kishida Y."/>
            <person name="Kiyokawa C."/>
            <person name="Kohara M."/>
            <person name="Matsumoto M."/>
            <person name="Matsuno A."/>
            <person name="Nakazaki N."/>
            <person name="Shimpo S."/>
            <person name="Takeuchi C."/>
            <person name="Yamada M."/>
            <person name="Tabata S."/>
        </authorList>
    </citation>
    <scope>NUCLEOTIDE SEQUENCE [LARGE SCALE GENOMIC DNA]</scope>
    <source>
        <strain>ATCC 29082 / PCC 7421</strain>
    </source>
</reference>
<keyword id="KW-0963">Cytoplasm</keyword>
<keyword id="KW-0664">Pyridoxine biosynthesis</keyword>
<keyword id="KW-1185">Reference proteome</keyword>
<keyword id="KW-0808">Transferase</keyword>
<feature type="chain" id="PRO_0000231810" description="Pyridoxine 5'-phosphate synthase">
    <location>
        <begin position="1"/>
        <end position="239"/>
    </location>
</feature>
<feature type="active site" description="Proton acceptor" evidence="1">
    <location>
        <position position="43"/>
    </location>
</feature>
<feature type="active site" description="Proton acceptor" evidence="1">
    <location>
        <position position="70"/>
    </location>
</feature>
<feature type="active site" description="Proton donor" evidence="1">
    <location>
        <position position="191"/>
    </location>
</feature>
<feature type="binding site" evidence="1">
    <location>
        <position position="7"/>
    </location>
    <ligand>
        <name>3-amino-2-oxopropyl phosphate</name>
        <dbReference type="ChEBI" id="CHEBI:57279"/>
    </ligand>
</feature>
<feature type="binding site" evidence="1">
    <location>
        <begin position="9"/>
        <end position="10"/>
    </location>
    <ligand>
        <name>1-deoxy-D-xylulose 5-phosphate</name>
        <dbReference type="ChEBI" id="CHEBI:57792"/>
    </ligand>
</feature>
<feature type="binding site" evidence="1">
    <location>
        <position position="18"/>
    </location>
    <ligand>
        <name>3-amino-2-oxopropyl phosphate</name>
        <dbReference type="ChEBI" id="CHEBI:57279"/>
    </ligand>
</feature>
<feature type="binding site" evidence="1">
    <location>
        <position position="45"/>
    </location>
    <ligand>
        <name>1-deoxy-D-xylulose 5-phosphate</name>
        <dbReference type="ChEBI" id="CHEBI:57792"/>
    </ligand>
</feature>
<feature type="binding site" evidence="1">
    <location>
        <position position="50"/>
    </location>
    <ligand>
        <name>1-deoxy-D-xylulose 5-phosphate</name>
        <dbReference type="ChEBI" id="CHEBI:57792"/>
    </ligand>
</feature>
<feature type="binding site" evidence="1">
    <location>
        <position position="100"/>
    </location>
    <ligand>
        <name>1-deoxy-D-xylulose 5-phosphate</name>
        <dbReference type="ChEBI" id="CHEBI:57792"/>
    </ligand>
</feature>
<feature type="binding site" evidence="1">
    <location>
        <position position="192"/>
    </location>
    <ligand>
        <name>3-amino-2-oxopropyl phosphate</name>
        <dbReference type="ChEBI" id="CHEBI:57279"/>
    </ligand>
</feature>
<feature type="binding site" evidence="1">
    <location>
        <begin position="213"/>
        <end position="214"/>
    </location>
    <ligand>
        <name>3-amino-2-oxopropyl phosphate</name>
        <dbReference type="ChEBI" id="CHEBI:57279"/>
    </ligand>
</feature>
<feature type="site" description="Transition state stabilizer" evidence="1">
    <location>
        <position position="151"/>
    </location>
</feature>